<feature type="chain" id="PRO_0000448999" description="Bifunctional cytochrome P450/NADPH--P450 reductase ascE">
    <location>
        <begin position="1"/>
        <end position="1064"/>
    </location>
</feature>
<feature type="domain" description="Flavodoxin-like" evidence="3">
    <location>
        <begin position="504"/>
        <end position="644"/>
    </location>
</feature>
<feature type="domain" description="FAD-binding FR-type" evidence="4">
    <location>
        <begin position="676"/>
        <end position="905"/>
    </location>
</feature>
<feature type="region of interest" description="Cytochrome P450" evidence="2">
    <location>
        <begin position="1"/>
        <end position="484"/>
    </location>
</feature>
<feature type="region of interest" description="NADPH-P-450 reductase" evidence="2">
    <location>
        <begin position="485"/>
        <end position="1064"/>
    </location>
</feature>
<feature type="binding site" description="axial binding residue" evidence="1">
    <location>
        <position position="411"/>
    </location>
    <ligand>
        <name>heme</name>
        <dbReference type="ChEBI" id="CHEBI:30413"/>
    </ligand>
    <ligandPart>
        <name>Fe</name>
        <dbReference type="ChEBI" id="CHEBI:18248"/>
    </ligandPart>
</feature>
<feature type="binding site" evidence="3">
    <location>
        <begin position="510"/>
        <end position="514"/>
    </location>
    <ligand>
        <name>FMN</name>
        <dbReference type="ChEBI" id="CHEBI:58210"/>
    </ligand>
</feature>
<feature type="binding site" evidence="3">
    <location>
        <begin position="588"/>
        <end position="620"/>
    </location>
    <ligand>
        <name>FMN</name>
        <dbReference type="ChEBI" id="CHEBI:58210"/>
    </ligand>
</feature>
<feature type="site" description="Important for catalytic activity" evidence="1">
    <location>
        <position position="271"/>
    </location>
</feature>
<dbReference type="EC" id="1.14.14.-" evidence="8 9"/>
<dbReference type="EMBL" id="LC406756">
    <property type="protein sequence ID" value="BBF25317.1"/>
    <property type="molecule type" value="Genomic_DNA"/>
</dbReference>
<dbReference type="SMR" id="A0A455R5H4"/>
<dbReference type="UniPathway" id="UPA00213"/>
<dbReference type="GO" id="GO:0005829">
    <property type="term" value="C:cytosol"/>
    <property type="evidence" value="ECO:0007669"/>
    <property type="project" value="TreeGrafter"/>
</dbReference>
<dbReference type="GO" id="GO:0070330">
    <property type="term" value="F:aromatase activity"/>
    <property type="evidence" value="ECO:0007669"/>
    <property type="project" value="InterPro"/>
</dbReference>
<dbReference type="GO" id="GO:0050660">
    <property type="term" value="F:flavin adenine dinucleotide binding"/>
    <property type="evidence" value="ECO:0007669"/>
    <property type="project" value="TreeGrafter"/>
</dbReference>
<dbReference type="GO" id="GO:0010181">
    <property type="term" value="F:FMN binding"/>
    <property type="evidence" value="ECO:0007669"/>
    <property type="project" value="InterPro"/>
</dbReference>
<dbReference type="GO" id="GO:0020037">
    <property type="term" value="F:heme binding"/>
    <property type="evidence" value="ECO:0007669"/>
    <property type="project" value="InterPro"/>
</dbReference>
<dbReference type="GO" id="GO:0005506">
    <property type="term" value="F:iron ion binding"/>
    <property type="evidence" value="ECO:0007669"/>
    <property type="project" value="InterPro"/>
</dbReference>
<dbReference type="GO" id="GO:0003958">
    <property type="term" value="F:NADPH-hemoprotein reductase activity"/>
    <property type="evidence" value="ECO:0007669"/>
    <property type="project" value="InterPro"/>
</dbReference>
<dbReference type="GO" id="GO:0016114">
    <property type="term" value="P:terpenoid biosynthetic process"/>
    <property type="evidence" value="ECO:0007669"/>
    <property type="project" value="UniProtKB-UniPathway"/>
</dbReference>
<dbReference type="CDD" id="cd06206">
    <property type="entry name" value="bifunctional_CYPOR"/>
    <property type="match status" value="1"/>
</dbReference>
<dbReference type="CDD" id="cd11068">
    <property type="entry name" value="CYP120A1"/>
    <property type="match status" value="1"/>
</dbReference>
<dbReference type="FunFam" id="1.10.630.10:FF:000040">
    <property type="entry name" value="Bifunctional cytochrome P450/NADPH--P450 reductase"/>
    <property type="match status" value="1"/>
</dbReference>
<dbReference type="Gene3D" id="3.40.50.360">
    <property type="match status" value="1"/>
</dbReference>
<dbReference type="Gene3D" id="1.10.630.10">
    <property type="entry name" value="Cytochrome P450"/>
    <property type="match status" value="1"/>
</dbReference>
<dbReference type="Gene3D" id="1.20.990.10">
    <property type="entry name" value="NADPH-cytochrome p450 Reductase, Chain A, domain 3"/>
    <property type="match status" value="1"/>
</dbReference>
<dbReference type="Gene3D" id="3.40.50.80">
    <property type="entry name" value="Nucleotide-binding domain of ferredoxin-NADP reductase (FNR) module"/>
    <property type="match status" value="1"/>
</dbReference>
<dbReference type="Gene3D" id="2.40.30.10">
    <property type="entry name" value="Translation factors"/>
    <property type="match status" value="1"/>
</dbReference>
<dbReference type="InterPro" id="IPR023206">
    <property type="entry name" value="Bifunctional_P450_P450_red"/>
</dbReference>
<dbReference type="InterPro" id="IPR003097">
    <property type="entry name" value="CysJ-like_FAD-binding"/>
</dbReference>
<dbReference type="InterPro" id="IPR001128">
    <property type="entry name" value="Cyt_P450"/>
</dbReference>
<dbReference type="InterPro" id="IPR017972">
    <property type="entry name" value="Cyt_P450_CS"/>
</dbReference>
<dbReference type="InterPro" id="IPR002401">
    <property type="entry name" value="Cyt_P450_E_grp-I"/>
</dbReference>
<dbReference type="InterPro" id="IPR036396">
    <property type="entry name" value="Cyt_P450_sf"/>
</dbReference>
<dbReference type="InterPro" id="IPR017927">
    <property type="entry name" value="FAD-bd_FR_type"/>
</dbReference>
<dbReference type="InterPro" id="IPR008254">
    <property type="entry name" value="Flavodoxin/NO_synth"/>
</dbReference>
<dbReference type="InterPro" id="IPR029039">
    <property type="entry name" value="Flavoprotein-like_sf"/>
</dbReference>
<dbReference type="InterPro" id="IPR039261">
    <property type="entry name" value="FNR_nucleotide-bd"/>
</dbReference>
<dbReference type="InterPro" id="IPR023173">
    <property type="entry name" value="NADPH_Cyt_P450_Rdtase_alpha"/>
</dbReference>
<dbReference type="InterPro" id="IPR001433">
    <property type="entry name" value="OxRdtase_FAD/NAD-bd"/>
</dbReference>
<dbReference type="InterPro" id="IPR017938">
    <property type="entry name" value="Riboflavin_synthase-like_b-brl"/>
</dbReference>
<dbReference type="PANTHER" id="PTHR19384:SF127">
    <property type="entry name" value="BIFUNCTIONAL CYTOCHROME P450_NADPH--P450 REDUCTASE"/>
    <property type="match status" value="1"/>
</dbReference>
<dbReference type="PANTHER" id="PTHR19384">
    <property type="entry name" value="NITRIC OXIDE SYNTHASE-RELATED"/>
    <property type="match status" value="1"/>
</dbReference>
<dbReference type="Pfam" id="PF00667">
    <property type="entry name" value="FAD_binding_1"/>
    <property type="match status" value="1"/>
</dbReference>
<dbReference type="Pfam" id="PF00258">
    <property type="entry name" value="Flavodoxin_1"/>
    <property type="match status" value="1"/>
</dbReference>
<dbReference type="Pfam" id="PF00175">
    <property type="entry name" value="NAD_binding_1"/>
    <property type="match status" value="1"/>
</dbReference>
<dbReference type="Pfam" id="PF00067">
    <property type="entry name" value="p450"/>
    <property type="match status" value="1"/>
</dbReference>
<dbReference type="PIRSF" id="PIRSF000209">
    <property type="entry name" value="Bifunctional_P450_P450R"/>
    <property type="match status" value="1"/>
</dbReference>
<dbReference type="PRINTS" id="PR00463">
    <property type="entry name" value="EP450I"/>
</dbReference>
<dbReference type="PRINTS" id="PR00385">
    <property type="entry name" value="P450"/>
</dbReference>
<dbReference type="SUPFAM" id="SSF48264">
    <property type="entry name" value="Cytochrome P450"/>
    <property type="match status" value="1"/>
</dbReference>
<dbReference type="SUPFAM" id="SSF52343">
    <property type="entry name" value="Ferredoxin reductase-like, C-terminal NADP-linked domain"/>
    <property type="match status" value="1"/>
</dbReference>
<dbReference type="SUPFAM" id="SSF52218">
    <property type="entry name" value="Flavoproteins"/>
    <property type="match status" value="1"/>
</dbReference>
<dbReference type="SUPFAM" id="SSF63380">
    <property type="entry name" value="Riboflavin synthase domain-like"/>
    <property type="match status" value="1"/>
</dbReference>
<dbReference type="PROSITE" id="PS00086">
    <property type="entry name" value="CYTOCHROME_P450"/>
    <property type="match status" value="1"/>
</dbReference>
<dbReference type="PROSITE" id="PS51384">
    <property type="entry name" value="FAD_FR"/>
    <property type="match status" value="1"/>
</dbReference>
<dbReference type="PROSITE" id="PS50902">
    <property type="entry name" value="FLAVODOXIN_LIKE"/>
    <property type="match status" value="1"/>
</dbReference>
<organism>
    <name type="scientific">Acremonium egyptiacum</name>
    <name type="common">Oospora egyptiaca</name>
    <dbReference type="NCBI Taxonomy" id="749675"/>
    <lineage>
        <taxon>Eukaryota</taxon>
        <taxon>Fungi</taxon>
        <taxon>Dikarya</taxon>
        <taxon>Ascomycota</taxon>
        <taxon>Pezizomycotina</taxon>
        <taxon>Sordariomycetes</taxon>
        <taxon>Hypocreomycetidae</taxon>
        <taxon>Hypocreales</taxon>
        <taxon>Hypocreales incertae sedis</taxon>
        <taxon>Acremonium</taxon>
    </lineage>
</organism>
<accession>A0A455R5H4</accession>
<reference key="1">
    <citation type="journal article" date="2019" name="Proc. Natl. Acad. Sci. U.S.A.">
        <title>Complete biosynthetic pathways of ascofuranone and ascochlorin in Acremonium egyptiacum.</title>
        <authorList>
            <person name="Araki Y."/>
            <person name="Awakawa T."/>
            <person name="Matsuzaki M."/>
            <person name="Cho R."/>
            <person name="Matsuda Y."/>
            <person name="Hoshino S."/>
            <person name="Shinohara Y."/>
            <person name="Yamamoto M."/>
            <person name="Kido Y."/>
            <person name="Inaoka D.K."/>
            <person name="Nagamune K."/>
            <person name="Ito K."/>
            <person name="Abe I."/>
            <person name="Kita K."/>
        </authorList>
    </citation>
    <scope>NUCLEOTIDE SEQUENCE [GENOMIC DNA]</scope>
    <scope>FUNCTION</scope>
    <scope>CATALYTIC ACTIVITY</scope>
    <scope>DISRUPTION PHENOTYPE</scope>
    <scope>INDUCTION</scope>
    <scope>PATHWAY</scope>
    <source>
        <strain>F-1392</strain>
    </source>
</reference>
<reference key="2">
    <citation type="journal article" date="2002" name="Biochim. Biophys. Acta">
        <title>Trypanosome alternative oxidase as a target of chemotherapy.</title>
        <authorList>
            <person name="Nihei C."/>
            <person name="Fukai Y."/>
            <person name="Kita K."/>
        </authorList>
    </citation>
    <scope>BIOTECHNOLOGY</scope>
</reference>
<reference key="3">
    <citation type="journal article" date="2003" name="Parasitol. Int.">
        <title>The efficacy of ascofuranone in a consecutive treatment on Trypanosoma brucei brucei in mice.</title>
        <authorList>
            <person name="Yabu Y."/>
            <person name="Yoshida A."/>
            <person name="Suzuki T."/>
            <person name="Nihei C."/>
            <person name="Kawai K."/>
            <person name="Minagawa N."/>
            <person name="Hosokawa T."/>
            <person name="Nagai K."/>
            <person name="Kita K."/>
            <person name="Ohta N."/>
        </authorList>
    </citation>
    <scope>BIOTECHNOLOGY</scope>
</reference>
<reference key="4">
    <citation type="journal article" date="2010" name="Parasitol. Int.">
        <title>Trypanosome alternative oxidase, a potential therapeutic target for sleeping sickness, is conserved among Trypanosoma brucei subspecies.</title>
        <authorList>
            <person name="Nakamura K."/>
            <person name="Fujioka S."/>
            <person name="Fukumoto S."/>
            <person name="Inoue N."/>
            <person name="Sakamoto K."/>
            <person name="Hirata H."/>
            <person name="Kido Y."/>
            <person name="Yabu Y."/>
            <person name="Suzuki T."/>
            <person name="Watanabe Y."/>
            <person name="Saimoto H."/>
            <person name="Akiyama H."/>
            <person name="Kita K."/>
        </authorList>
    </citation>
    <scope>BIOTECHNOLOGY</scope>
</reference>
<reference key="5">
    <citation type="journal article" date="2022" name="J. Gen. Appl. Microbiol.">
        <title>Heterologous production of ascofuranone and ilicicolin A in Aspergillus sojae.</title>
        <authorList>
            <person name="Araki Y."/>
            <person name="Shinohara Y."/>
            <person name="Hara S."/>
            <person name="Sato A."/>
            <person name="Sakaue R."/>
            <person name="Gomi K."/>
            <person name="Kita K."/>
            <person name="Ito K."/>
        </authorList>
    </citation>
    <scope>FUNCTION</scope>
    <scope>CATALYTIC ACTIVITY</scope>
    <scope>PATHWAY</scope>
</reference>
<gene>
    <name evidence="10" type="primary">ascE</name>
</gene>
<name>ASCE_ACREG</name>
<comment type="function">
    <text evidence="8 9">Bifunctional cytochrome P450/NADPH--P450 reductase; part of the asc-1 gene cluster that mediates the biosynthesis both ascochlorin and ascofuranone, a strong inhibitor of cyanide-insensitive alternative oxidases and a promising drug candidate against African trypanosomiasis (PubMed:30952781, PubMed:35418536). The first step in the pathway is performed by the non-reducing polyketide synthase ascC that produces orsellinic acid by condensing acetyl-CoA with 3 malonyl-CoA units (PubMed:30952781, PubMed:35418536). Orsellinic acid is then prenylated by the prenyltransferase ascA to yield ilicicolinic acid B (PubMed:30952781, PubMed:35418536). Ilicicolinic acid B is further reduced to ilicicolin B by the reductase ascB (PubMed:30952781, PubMed:35418536). The halogenase ascD then chlorinates ilicicolin B to produce ilicicolin A which is converted to ilicicolin A epoxide by the cytochrome P450 monooxygenase ascE that catalyzes stereoselective epoxidation of the terminal double bond of the prenyl group (PubMed:30952781, PubMed:35418536). Ilicicolin A epoxide is the last common precursor for the biosynthesis of ascofuranone and ascochlorin (PubMed:30952781, PubMed:35418536). The terpene cyclase ascF produces a monocyclic terpene, and the cyclization reaction is proposed to be initiated by protonation of the terminal epoxide of ilicicolin A epoxide to generate a monocyclic tertiarycation, which is followed by a series of hydride and methyl shifts with abstraction of proton, leading to the formation of the (14S,15R,19R)-trimethylcyclohexanone ring structure of ilicicolin C, which is finally reduced to ascochlorin by the dehydrogenase ascG (PubMed:30952781). On the other hand, ilicicolin A epoxide is hydroxylated by the cytochrome P450 monooxygenase ascH, and the resultant product is cyclized by the terpene cyclase ascI to ascofuranol via protonation-initiated epoxide ring opening, which facilitates the 6-endo-tet cyclization to form the tetrahy-drofuran ring (PubMed:30952781, PubMed:35418536). Finally, ascofuranol is oxidized into ascofuranone by ascJ (PubMed:30952781, PubMed:35418536).</text>
</comment>
<comment type="catalytic activity">
    <reaction evidence="8 9">
        <text>ilicicolin A + NADPH + O2 + H(+) = ilicicolin A epoxide + NADP(+) + H2O</text>
        <dbReference type="Rhea" id="RHEA:63092"/>
        <dbReference type="ChEBI" id="CHEBI:15377"/>
        <dbReference type="ChEBI" id="CHEBI:15378"/>
        <dbReference type="ChEBI" id="CHEBI:15379"/>
        <dbReference type="ChEBI" id="CHEBI:57783"/>
        <dbReference type="ChEBI" id="CHEBI:58349"/>
        <dbReference type="ChEBI" id="CHEBI:146154"/>
        <dbReference type="ChEBI" id="CHEBI:146155"/>
    </reaction>
    <physiologicalReaction direction="left-to-right" evidence="8 9">
        <dbReference type="Rhea" id="RHEA:63093"/>
    </physiologicalReaction>
</comment>
<comment type="cofactor">
    <cofactor evidence="2">
        <name>FAD</name>
        <dbReference type="ChEBI" id="CHEBI:57692"/>
    </cofactor>
    <text evidence="2">Binds 1 FAD.</text>
</comment>
<comment type="cofactor">
    <cofactor evidence="2">
        <name>FMN</name>
        <dbReference type="ChEBI" id="CHEBI:58210"/>
    </cofactor>
    <text evidence="2">Binds 1 FMN.</text>
</comment>
<comment type="cofactor">
    <cofactor evidence="2">
        <name>heme</name>
        <dbReference type="ChEBI" id="CHEBI:30413"/>
    </cofactor>
</comment>
<comment type="pathway">
    <text evidence="8 9">Secondary metabolite biosynthesis; terpenoid biosynthesis.</text>
</comment>
<comment type="induction">
    <text evidence="8">Expression is induced on AF medium.</text>
</comment>
<comment type="disruption phenotype">
    <text evidence="8">Impairs the production of ascochlorin and ascofuranone, and leads to the accumulation of ilicicolin A.</text>
</comment>
<comment type="biotechnology">
    <text evidence="5 6 7">Ascofuranone is a specific inhibitor of trypanosome alternative oxidase (TAO), and quickly kills African trypanosomes in vitro and cures infected mice. As an essential factor for trypanosome survival, TAO is a promising drug target due to the absence of alternative oxidases in the mammalian host.</text>
</comment>
<comment type="similarity">
    <text evidence="11">In the N-terminal section; belongs to the cytochrome P450 family.</text>
</comment>
<sequence length="1064" mass="117894">MTELIPGPKGLPLIGNVLDIDPVDAVVCLGRIADTYGHIYQLKVGGSAKIFISSRELVDELSDESRFTKLVSGPLAQLRNVCHDSLFTAQSDEPAWDLAHKILMPAFGPLAIRGMFDEMHDIASQLVVKWARFGPQDTIDVSGDFTRLTLDAIALCSMSTRFNSFYKQDQHPFVSSMLEVLAESGKRAVRPPFVNDYIFRGSLKHYNTEIATMRRIAMDVLAERRANPMACQKNDLLNAMINGRDPKTGEGLSDESTINNLIVFLIAGHETTSGLLSFLFYYLLTRPDVFEKAQKEVDELVGRGPVTIEHMSKLHYIEACLRETLRLHPTAPVITFKTKPGFEKESTTIGGGKYKIDRDQGIVALLVNIQRDPKVWGDDANEFKPERMTDEKFNNLPANCWKPFGNGIRGCIGRAFAWQESLLITAMLLQNFNFQLADPDYKLQIKQTLTIKPGNFFMHAKLRDHVDPLELEGILHGGAKKGSKIDGPSSGASLATTEQELQPMTILYGSDSGTCESMAQSLARAARGRGYGATVKTLDSAVEQVPKDQPVVIVSPSYNGQPPSNATDFVKWLEALDSKALKDVKYSVYGCGNKDYTSTFHRIPKLLDAEFERCGAKRIAETGLGDVTVGDIFSDFERWQDDQLWPALGVAHMDGDADAEFDIHVDRSGRAAELEVDADEATVQSNQVLTAPGEPEKRYITLKLPEGMQYKSGDHLSVLPLNDWGVVRRVFAWAQLPWDAVVTIPKGTNTSLPTGRQISAKDLLSGYVELSQPATRKNIAKLAASSPCPFTQKSLSKLEEHFDSDIAQRRLSVLDILEEFPAIDITFGNFISMLPPMRPRQYSIASSPMADPSTATLMWTVLNSEAYSGSGRRFLGVCSTYLAGLAEGDRVHVTVKPALRLFHPPSDPESMPIIMACAGTGLAPFRGFLEERVCQMKAGRALAPAYLFVGCRDPEKDALLKDELAQWERDGVVKIYYAFSRASDQSDGCKHVQDRIWNERDLVRKGLFEGNARFFMCGGSGAGKSVEDVVKRIYKDNKGESQEKAAESWFQDLKANRYVTEIFA</sequence>
<proteinExistence type="evidence at protein level"/>
<evidence type="ECO:0000250" key="1">
    <source>
        <dbReference type="UniProtKB" id="P14779"/>
    </source>
</evidence>
<evidence type="ECO:0000250" key="2">
    <source>
        <dbReference type="UniProtKB" id="Q9Y8G7"/>
    </source>
</evidence>
<evidence type="ECO:0000255" key="3">
    <source>
        <dbReference type="PROSITE-ProRule" id="PRU00088"/>
    </source>
</evidence>
<evidence type="ECO:0000255" key="4">
    <source>
        <dbReference type="PROSITE-ProRule" id="PRU00716"/>
    </source>
</evidence>
<evidence type="ECO:0000269" key="5">
    <source>
    </source>
</evidence>
<evidence type="ECO:0000269" key="6">
    <source>
    </source>
</evidence>
<evidence type="ECO:0000269" key="7">
    <source>
    </source>
</evidence>
<evidence type="ECO:0000269" key="8">
    <source>
    </source>
</evidence>
<evidence type="ECO:0000269" key="9">
    <source>
    </source>
</evidence>
<evidence type="ECO:0000303" key="10">
    <source>
    </source>
</evidence>
<evidence type="ECO:0000305" key="11"/>
<protein>
    <recommendedName>
        <fullName evidence="10">Bifunctional cytochrome P450/NADPH--P450 reductase ascE</fullName>
        <ecNumber evidence="8 9">1.14.14.-</ecNumber>
    </recommendedName>
    <alternativeName>
        <fullName evidence="10">Ascofuranone/ascochlorin biosynthesis clusters protein E</fullName>
    </alternativeName>
</protein>
<keyword id="KW-0249">Electron transport</keyword>
<keyword id="KW-0274">FAD</keyword>
<keyword id="KW-0285">Flavoprotein</keyword>
<keyword id="KW-0288">FMN</keyword>
<keyword id="KW-0349">Heme</keyword>
<keyword id="KW-0408">Iron</keyword>
<keyword id="KW-0479">Metal-binding</keyword>
<keyword id="KW-0503">Monooxygenase</keyword>
<keyword id="KW-0521">NADP</keyword>
<keyword id="KW-0560">Oxidoreductase</keyword>
<keyword id="KW-0813">Transport</keyword>